<comment type="catalytic activity">
    <reaction>
        <text>(1,4-alpha-D-galacturonosyl)n+m + H2O = (1,4-alpha-D-galacturonosyl)n + (1,4-alpha-D-galacturonosyl)m.</text>
        <dbReference type="EC" id="3.2.1.15"/>
    </reaction>
</comment>
<comment type="subcellular location">
    <subcellularLocation>
        <location evidence="2">Membrane</location>
        <topology evidence="2">Single-pass membrane protein</topology>
    </subcellularLocation>
</comment>
<comment type="similarity">
    <text evidence="2">Belongs to the glycosyl hydrolase 28 family.</text>
</comment>
<organism>
    <name type="scientific">Vitis vinifera</name>
    <name type="common">Grape</name>
    <dbReference type="NCBI Taxonomy" id="29760"/>
    <lineage>
        <taxon>Eukaryota</taxon>
        <taxon>Viridiplantae</taxon>
        <taxon>Streptophyta</taxon>
        <taxon>Embryophyta</taxon>
        <taxon>Tracheophyta</taxon>
        <taxon>Spermatophyta</taxon>
        <taxon>Magnoliopsida</taxon>
        <taxon>eudicotyledons</taxon>
        <taxon>Gunneridae</taxon>
        <taxon>Pentapetalae</taxon>
        <taxon>rosids</taxon>
        <taxon>Vitales</taxon>
        <taxon>Vitaceae</taxon>
        <taxon>Viteae</taxon>
        <taxon>Vitis</taxon>
    </lineage>
</organism>
<keyword id="KW-0903">Direct protein sequencing</keyword>
<keyword id="KW-0325">Glycoprotein</keyword>
<keyword id="KW-0326">Glycosidase</keyword>
<keyword id="KW-0378">Hydrolase</keyword>
<keyword id="KW-0472">Membrane</keyword>
<keyword id="KW-0677">Repeat</keyword>
<keyword id="KW-0812">Transmembrane</keyword>
<keyword id="KW-1133">Transmembrane helix</keyword>
<feature type="chain" id="PRO_0000363726" description="Probable polygalacturonase">
    <location>
        <begin position="1"/>
        <end position="491"/>
    </location>
</feature>
<feature type="transmembrane region" description="Helical" evidence="2">
    <location>
        <begin position="15"/>
        <end position="35"/>
    </location>
</feature>
<feature type="repeat" description="PbH1 1" evidence="2">
    <location>
        <begin position="230"/>
        <end position="256"/>
    </location>
</feature>
<feature type="repeat" description="PbH1 2" evidence="2">
    <location>
        <begin position="257"/>
        <end position="278"/>
    </location>
</feature>
<feature type="repeat" description="PbH1 3" evidence="2">
    <location>
        <begin position="319"/>
        <end position="340"/>
    </location>
</feature>
<feature type="repeat" description="PbH1 4" evidence="2">
    <location>
        <begin position="348"/>
        <end position="369"/>
    </location>
</feature>
<feature type="active site" description="Proton donor" evidence="1">
    <location>
        <position position="271"/>
    </location>
</feature>
<feature type="glycosylation site" description="N-linked (GlcNAc...) asparagine" evidence="2">
    <location>
        <position position="165"/>
    </location>
</feature>
<feature type="glycosylation site" description="N-linked (GlcNAc...) asparagine" evidence="2">
    <location>
        <position position="175"/>
    </location>
</feature>
<feature type="glycosylation site" description="N-linked (GlcNAc...) asparagine" evidence="2">
    <location>
        <position position="214"/>
    </location>
</feature>
<feature type="glycosylation site" description="N-linked (GlcNAc...) asparagine" evidence="2">
    <location>
        <position position="399"/>
    </location>
</feature>
<feature type="glycosylation site" description="N-linked (GlcNAc...) asparagine" evidence="2">
    <location>
        <position position="421"/>
    </location>
</feature>
<evidence type="ECO:0000250" key="1">
    <source>
        <dbReference type="UniProtKB" id="Q7M1E7"/>
    </source>
</evidence>
<evidence type="ECO:0000255" key="2"/>
<evidence type="ECO:0000269" key="3">
    <source>
    </source>
</evidence>
<evidence type="ECO:0000305" key="4"/>
<sequence>MVETHKKKIANLTQPIVSFYCFQVVSVLVAVVLLLSVSRGECRKGRILEALEYSAISCRAHSASLVDFGGVGDGQTLNTKAFQDAVSELSKYGSEGGAQLYVPAGKWLTGSFSLTSHFTLFLHRDAVLLASQDISQWPVIKPLPSYGRGRDAAAGRYTSLIFGTNLTDVIITGDNGTIDGQGGLWWQRFHGGKLKYTRPYLIELMYSADIQISNLTLLNSPSWNVHPVYSRNILIQGITILAPVRSPNTDGINPDSCTNTRIEDCYIVSGDDCVAVKSGWDEYGIAYGMPTKQLVIRRLTCISPYSAVIALGSEMSGGIQDVRAEDIVAINSESGIRIKTGIGRGGYVKDIYVRGMTMKTMKWAFWMTGNYGSHADNHYDPKAFPVIQGINYRDMVAENVSMAARLEGIPSDPFTGICISNVTIHLAAKAKKVPWTCTDVEGISSGVTPTPCSTLPDQGPEKTSLCNFPAESLPIDTVELQKCSYGINYYP</sequence>
<name>PGLR_VITVI</name>
<gene>
    <name type="ORF">GSVIVT00026920001</name>
    <name type="ORF">LOC100243180</name>
</gene>
<protein>
    <recommendedName>
        <fullName>Probable polygalacturonase</fullName>
        <shortName evidence="1">PG</shortName>
        <ecNumber>3.2.1.15</ecNumber>
    </recommendedName>
    <alternativeName>
        <fullName evidence="1">Pectinase</fullName>
    </alternativeName>
</protein>
<proteinExistence type="evidence at protein level"/>
<accession>A7PZL3</accession>
<dbReference type="EC" id="3.2.1.15"/>
<dbReference type="SMR" id="A7PZL3"/>
<dbReference type="PaxDb" id="29760-VIT_15s0046g02000.t01"/>
<dbReference type="eggNOG" id="ENOG502QPMF">
    <property type="taxonomic scope" value="Eukaryota"/>
</dbReference>
<dbReference type="OrthoDB" id="187139at2759"/>
<dbReference type="ExpressionAtlas" id="A7PZL3">
    <property type="expression patterns" value="baseline and differential"/>
</dbReference>
<dbReference type="GO" id="GO:0016020">
    <property type="term" value="C:membrane"/>
    <property type="evidence" value="ECO:0007669"/>
    <property type="project" value="UniProtKB-SubCell"/>
</dbReference>
<dbReference type="GO" id="GO:0004650">
    <property type="term" value="F:polygalacturonase activity"/>
    <property type="evidence" value="ECO:0007669"/>
    <property type="project" value="UniProtKB-EC"/>
</dbReference>
<dbReference type="GO" id="GO:0005975">
    <property type="term" value="P:carbohydrate metabolic process"/>
    <property type="evidence" value="ECO:0007669"/>
    <property type="project" value="InterPro"/>
</dbReference>
<dbReference type="Gene3D" id="2.160.20.10">
    <property type="entry name" value="Single-stranded right-handed beta-helix, Pectin lyase-like"/>
    <property type="match status" value="1"/>
</dbReference>
<dbReference type="InterPro" id="IPR051801">
    <property type="entry name" value="GH28_Enzymes"/>
</dbReference>
<dbReference type="InterPro" id="IPR000743">
    <property type="entry name" value="Glyco_hydro_28"/>
</dbReference>
<dbReference type="InterPro" id="IPR012334">
    <property type="entry name" value="Pectin_lyas_fold"/>
</dbReference>
<dbReference type="InterPro" id="IPR011050">
    <property type="entry name" value="Pectin_lyase_fold/virulence"/>
</dbReference>
<dbReference type="PANTHER" id="PTHR31339:SF50">
    <property type="entry name" value="PECTIN LYASE-LIKE SUPERFAMILY PROTEIN"/>
    <property type="match status" value="1"/>
</dbReference>
<dbReference type="PANTHER" id="PTHR31339">
    <property type="entry name" value="PECTIN LYASE-RELATED"/>
    <property type="match status" value="1"/>
</dbReference>
<dbReference type="Pfam" id="PF00295">
    <property type="entry name" value="Glyco_hydro_28"/>
    <property type="match status" value="1"/>
</dbReference>
<dbReference type="SUPFAM" id="SSF51126">
    <property type="entry name" value="Pectin lyase-like"/>
    <property type="match status" value="1"/>
</dbReference>
<reference key="1">
    <citation type="journal article" date="2007" name="Nature">
        <title>The grapevine genome sequence suggests ancestral hexaploidization in major angiosperm phyla.</title>
        <authorList>
            <person name="Jaillon O."/>
            <person name="Aury J.-M."/>
            <person name="Noel B."/>
            <person name="Policriti A."/>
            <person name="Clepet C."/>
            <person name="Casagrande A."/>
            <person name="Choisne N."/>
            <person name="Aubourg S."/>
            <person name="Vitulo N."/>
            <person name="Jubin C."/>
            <person name="Vezzi A."/>
            <person name="Legeai F."/>
            <person name="Hugueney P."/>
            <person name="Dasilva C."/>
            <person name="Horner D."/>
            <person name="Mica E."/>
            <person name="Jublot D."/>
            <person name="Poulain J."/>
            <person name="Bruyere C."/>
            <person name="Billault A."/>
            <person name="Segurens B."/>
            <person name="Gouyvenoux M."/>
            <person name="Ugarte E."/>
            <person name="Cattonaro F."/>
            <person name="Anthouard V."/>
            <person name="Vico V."/>
            <person name="Del Fabbro C."/>
            <person name="Alaux M."/>
            <person name="Di Gaspero G."/>
            <person name="Dumas V."/>
            <person name="Felice N."/>
            <person name="Paillard S."/>
            <person name="Juman I."/>
            <person name="Moroldo M."/>
            <person name="Scalabrin S."/>
            <person name="Canaguier A."/>
            <person name="Le Clainche I."/>
            <person name="Malacrida G."/>
            <person name="Durand E."/>
            <person name="Pesole G."/>
            <person name="Laucou V."/>
            <person name="Chatelet P."/>
            <person name="Merdinoglu D."/>
            <person name="Delledonne M."/>
            <person name="Pezzotti M."/>
            <person name="Lecharny A."/>
            <person name="Scarpelli C."/>
            <person name="Artiguenave F."/>
            <person name="Pe M.E."/>
            <person name="Valle G."/>
            <person name="Morgante M."/>
            <person name="Caboche M."/>
            <person name="Adam-Blondon A.-F."/>
            <person name="Weissenbach J."/>
            <person name="Quetier F."/>
            <person name="Wincker P."/>
        </authorList>
    </citation>
    <scope>NUCLEOTIDE SEQUENCE [LARGE SCALE GENOMIC DNA]</scope>
    <source>
        <strain evidence="3">cv. Pinot noir / PN40024</strain>
    </source>
</reference>
<reference evidence="4" key="2">
    <citation type="submission" date="2008-07" db="UniProtKB">
        <authorList>
            <person name="Almagro L."/>
            <person name="Belchi-Navarro S."/>
            <person name="Pedreno M.A."/>
        </authorList>
    </citation>
    <scope>PROTEIN SEQUENCE OF 324-337</scope>
</reference>